<evidence type="ECO:0000255" key="1">
    <source>
        <dbReference type="HAMAP-Rule" id="MF_01197"/>
    </source>
</evidence>
<organism>
    <name type="scientific">Streptomyces avermitilis (strain ATCC 31267 / DSM 46492 / JCM 5070 / NBRC 14893 / NCIMB 12804 / NRRL 8165 / MA-4680)</name>
    <dbReference type="NCBI Taxonomy" id="227882"/>
    <lineage>
        <taxon>Bacteria</taxon>
        <taxon>Bacillati</taxon>
        <taxon>Actinomycetota</taxon>
        <taxon>Actinomycetes</taxon>
        <taxon>Kitasatosporales</taxon>
        <taxon>Streptomycetaceae</taxon>
        <taxon>Streptomyces</taxon>
    </lineage>
</organism>
<feature type="chain" id="PRO_0000334115" description="Cell division protein SepF 1">
    <location>
        <begin position="1"/>
        <end position="134"/>
    </location>
</feature>
<protein>
    <recommendedName>
        <fullName evidence="1">Cell division protein SepF 1</fullName>
    </recommendedName>
</protein>
<sequence length="134" mass="14542">MRGGPVNSHDVTDEQWEGLAQVVPLRGRDAWPSAVGHRSIPEAQTEARRRFVVLRVNIFADARDVAETLMRGIPVLLDLTSAETEVAKRVLDFSTGVVFGLASGMHRVDRNVFLLTPPGTEVQGLMEGVGVPGI</sequence>
<proteinExistence type="inferred from homology"/>
<name>SEPF1_STRAW</name>
<accession>Q82KP4</accession>
<reference key="1">
    <citation type="journal article" date="2003" name="Nat. Biotechnol.">
        <title>Complete genome sequence and comparative analysis of the industrial microorganism Streptomyces avermitilis.</title>
        <authorList>
            <person name="Ikeda H."/>
            <person name="Ishikawa J."/>
            <person name="Hanamoto A."/>
            <person name="Shinose M."/>
            <person name="Kikuchi H."/>
            <person name="Shiba T."/>
            <person name="Sakaki Y."/>
            <person name="Hattori M."/>
            <person name="Omura S."/>
        </authorList>
    </citation>
    <scope>NUCLEOTIDE SEQUENCE [LARGE SCALE GENOMIC DNA]</scope>
    <source>
        <strain>ATCC 31267 / DSM 46492 / JCM 5070 / NBRC 14893 / NCIMB 12804 / NRRL 8165 / MA-4680</strain>
    </source>
</reference>
<reference key="2">
    <citation type="journal article" date="2001" name="Proc. Natl. Acad. Sci. U.S.A.">
        <title>Genome sequence of an industrial microorganism Streptomyces avermitilis: deducing the ability of producing secondary metabolites.</title>
        <authorList>
            <person name="Omura S."/>
            <person name="Ikeda H."/>
            <person name="Ishikawa J."/>
            <person name="Hanamoto A."/>
            <person name="Takahashi C."/>
            <person name="Shinose M."/>
            <person name="Takahashi Y."/>
            <person name="Horikawa H."/>
            <person name="Nakazawa H."/>
            <person name="Osonoe T."/>
            <person name="Kikuchi H."/>
            <person name="Shiba T."/>
            <person name="Sakaki Y."/>
            <person name="Hattori M."/>
        </authorList>
    </citation>
    <scope>NUCLEOTIDE SEQUENCE [LARGE SCALE GENOMIC DNA]</scope>
    <source>
        <strain>ATCC 31267 / DSM 46492 / JCM 5070 / NBRC 14893 / NCIMB 12804 / NRRL 8165 / MA-4680</strain>
    </source>
</reference>
<keyword id="KW-0131">Cell cycle</keyword>
<keyword id="KW-0132">Cell division</keyword>
<keyword id="KW-0963">Cytoplasm</keyword>
<keyword id="KW-1185">Reference proteome</keyword>
<keyword id="KW-0717">Septation</keyword>
<dbReference type="EMBL" id="BA000030">
    <property type="protein sequence ID" value="BAC70040.1"/>
    <property type="molecule type" value="Genomic_DNA"/>
</dbReference>
<dbReference type="SMR" id="Q82KP4"/>
<dbReference type="KEGG" id="sma:SAVERM_2329"/>
<dbReference type="eggNOG" id="COG1799">
    <property type="taxonomic scope" value="Bacteria"/>
</dbReference>
<dbReference type="HOGENOM" id="CLU_1926362_0_0_11"/>
<dbReference type="Proteomes" id="UP000000428">
    <property type="component" value="Chromosome"/>
</dbReference>
<dbReference type="GO" id="GO:0005737">
    <property type="term" value="C:cytoplasm"/>
    <property type="evidence" value="ECO:0007669"/>
    <property type="project" value="UniProtKB-SubCell"/>
</dbReference>
<dbReference type="GO" id="GO:0000917">
    <property type="term" value="P:division septum assembly"/>
    <property type="evidence" value="ECO:0007669"/>
    <property type="project" value="UniProtKB-KW"/>
</dbReference>
<dbReference type="GO" id="GO:0043093">
    <property type="term" value="P:FtsZ-dependent cytokinesis"/>
    <property type="evidence" value="ECO:0007669"/>
    <property type="project" value="UniProtKB-UniRule"/>
</dbReference>
<dbReference type="Gene3D" id="3.30.110.150">
    <property type="entry name" value="SepF-like protein"/>
    <property type="match status" value="1"/>
</dbReference>
<dbReference type="HAMAP" id="MF_01197">
    <property type="entry name" value="SepF"/>
    <property type="match status" value="1"/>
</dbReference>
<dbReference type="InterPro" id="IPR023052">
    <property type="entry name" value="Cell_div_SepF"/>
</dbReference>
<dbReference type="InterPro" id="IPR007561">
    <property type="entry name" value="Cell_div_SepF/SepF-rel"/>
</dbReference>
<dbReference type="InterPro" id="IPR038594">
    <property type="entry name" value="SepF-like_sf"/>
</dbReference>
<dbReference type="PANTHER" id="PTHR35798">
    <property type="entry name" value="CELL DIVISION PROTEIN SEPF"/>
    <property type="match status" value="1"/>
</dbReference>
<dbReference type="PANTHER" id="PTHR35798:SF1">
    <property type="entry name" value="CELL DIVISION PROTEIN SEPF"/>
    <property type="match status" value="1"/>
</dbReference>
<dbReference type="Pfam" id="PF04472">
    <property type="entry name" value="SepF"/>
    <property type="match status" value="1"/>
</dbReference>
<comment type="function">
    <text evidence="1">Cell division protein that is part of the divisome complex and is recruited early to the Z-ring. Probably stimulates Z-ring formation, perhaps through the cross-linking of FtsZ protofilaments. Its function overlaps with FtsA.</text>
</comment>
<comment type="subunit">
    <text evidence="1">Homodimer. Interacts with FtsZ.</text>
</comment>
<comment type="subcellular location">
    <subcellularLocation>
        <location evidence="1">Cytoplasm</location>
    </subcellularLocation>
    <text evidence="1">Localizes to the division site, in a FtsZ-dependent manner.</text>
</comment>
<comment type="similarity">
    <text evidence="1">Belongs to the SepF family.</text>
</comment>
<gene>
    <name evidence="1" type="primary">sepF1</name>
    <name type="ordered locus">SAV_2329</name>
</gene>